<gene>
    <name evidence="2" type="primary">rnb</name>
    <name type="ordered locus">XBJ1_2302</name>
</gene>
<feature type="chain" id="PRO_0000409537" description="Exoribonuclease 2">
    <location>
        <begin position="1"/>
        <end position="646"/>
    </location>
</feature>
<feature type="domain" description="RNB" evidence="1">
    <location>
        <begin position="191"/>
        <end position="518"/>
    </location>
</feature>
<feature type="domain" description="S1 motif" evidence="2">
    <location>
        <begin position="563"/>
        <end position="645"/>
    </location>
</feature>
<proteinExistence type="inferred from homology"/>
<name>RNB_XENBS</name>
<sequence length="646" mass="73860">MFQNNPLLAQLKQQLYSQTLRVEGLVKGTEKGFGFLEVDGQKSYFIPPPQMKKVMHGDRITAAIHTDKEKEIAEPEALIEPFLTRFVGRVQKKENDNRLWIIPDHPLLKDTILCRPANQVTHNFENGDWAVAEMRRHPLKGDRGFQAEITGYIIKGDDHYAPWWVTLTRHSLQREAPTMPDCQLDDGSLERIDLTALDFVTIDSATTEDMDDALHIVKNNDGSLKLSIAIADPTAYIKADSELDKIAYQRSFTNYLPGFNIPMLPRELSDDLCSLRPKARRPALVCQVSILEDGQLGDDMQFFAAWVESKFKLAYDDVSDWLEHQTGWKPESEAVTTQITLLQEMCERRNQWRHQYALVFKERPDYRFVLDKGGNVVDIVIDQRRSANRIVEEAMITANLCAAKILRDKLGFGIYNVHTGFEPTQIDQVVDVLKENGIEAEANALLELDGFCQLRRELDQQPTQFLDSRIRRFQTFAEIRPEPGPHFGLGFDAYATWTSPIRKYSDIINHRLLKAIIQQTEEEKPSEEVCLQLTERRRANRMAERDVGDWLYARFLHPHAGTDKTFSAEIVDITRGGLRIRLVDNGAIAFVPGSFLHAVRDELQCSQETGSVLIKGEAVHRLNDIINVRIEEVRMETRNIVARPVA</sequence>
<accession>D3V184</accession>
<reference key="1">
    <citation type="journal article" date="2011" name="PLoS ONE">
        <title>The entomopathogenic bacterial endosymbionts xenorhabdus and photorhabdus: convergent lifestyles from divergent genomes.</title>
        <authorList>
            <person name="Chaston J.M."/>
            <person name="Suen G."/>
            <person name="Tucker S.L."/>
            <person name="Andersen A.W."/>
            <person name="Bhasin A."/>
            <person name="Bode E."/>
            <person name="Bode H.B."/>
            <person name="Brachmann A.O."/>
            <person name="Cowles C.E."/>
            <person name="Cowles K.N."/>
            <person name="Darby C."/>
            <person name="de Leon L."/>
            <person name="Drace K."/>
            <person name="Du Z."/>
            <person name="Givaudan A."/>
            <person name="Herbert Tran E.E."/>
            <person name="Jewell K.A."/>
            <person name="Knack J.J."/>
            <person name="Krasomil-Osterfeld K.C."/>
            <person name="Kukor R."/>
            <person name="Lanois A."/>
            <person name="Latreille P."/>
            <person name="Leimgruber N.K."/>
            <person name="Lipke C.M."/>
            <person name="Liu R."/>
            <person name="Lu X."/>
            <person name="Martens E.C."/>
            <person name="Marri P.R."/>
            <person name="Medigue C."/>
            <person name="Menard M.L."/>
            <person name="Miller N.M."/>
            <person name="Morales-Soto N."/>
            <person name="Norton S."/>
            <person name="Ogier J.C."/>
            <person name="Orchard S.S."/>
            <person name="Park D."/>
            <person name="Park Y."/>
            <person name="Qurollo B.A."/>
            <person name="Sugar D.R."/>
            <person name="Richards G.R."/>
            <person name="Rouy Z."/>
            <person name="Slominski B."/>
            <person name="Slominski K."/>
            <person name="Snyder H."/>
            <person name="Tjaden B.C."/>
            <person name="van der Hoeven R."/>
            <person name="Welch R.D."/>
            <person name="Wheeler C."/>
            <person name="Xiang B."/>
            <person name="Barbazuk B."/>
            <person name="Gaudriault S."/>
            <person name="Goodner B."/>
            <person name="Slater S.C."/>
            <person name="Forst S."/>
            <person name="Goldman B.S."/>
            <person name="Goodrich-Blair H."/>
        </authorList>
    </citation>
    <scope>NUCLEOTIDE SEQUENCE [LARGE SCALE GENOMIC DNA]</scope>
    <source>
        <strain>SS-2004</strain>
    </source>
</reference>
<keyword id="KW-0963">Cytoplasm</keyword>
<keyword id="KW-0269">Exonuclease</keyword>
<keyword id="KW-0378">Hydrolase</keyword>
<keyword id="KW-0540">Nuclease</keyword>
<keyword id="KW-0694">RNA-binding</keyword>
<evidence type="ECO:0000255" key="1"/>
<evidence type="ECO:0000255" key="2">
    <source>
        <dbReference type="HAMAP-Rule" id="MF_01036"/>
    </source>
</evidence>
<comment type="function">
    <text evidence="2">Involved in mRNA degradation. Hydrolyzes single-stranded polyribonucleotides processively in the 3' to 5' direction.</text>
</comment>
<comment type="catalytic activity">
    <reaction evidence="2">
        <text>Exonucleolytic cleavage in the 3'- to 5'-direction to yield nucleoside 5'-phosphates.</text>
        <dbReference type="EC" id="3.1.13.1"/>
    </reaction>
</comment>
<comment type="subcellular location">
    <subcellularLocation>
        <location evidence="2">Cytoplasm</location>
    </subcellularLocation>
</comment>
<comment type="similarity">
    <text evidence="2">Belongs to the RNR ribonuclease family. RNase II subfamily.</text>
</comment>
<protein>
    <recommendedName>
        <fullName evidence="2">Exoribonuclease 2</fullName>
        <ecNumber evidence="2">3.1.13.1</ecNumber>
    </recommendedName>
    <alternativeName>
        <fullName evidence="2">Exoribonuclease II</fullName>
        <shortName evidence="2">RNase II</shortName>
        <shortName evidence="2">Ribonuclease II</shortName>
    </alternativeName>
</protein>
<organism>
    <name type="scientific">Xenorhabdus bovienii (strain SS-2004)</name>
    <name type="common">Xenorhabdus nematophila subsp. bovienii</name>
    <dbReference type="NCBI Taxonomy" id="406818"/>
    <lineage>
        <taxon>Bacteria</taxon>
        <taxon>Pseudomonadati</taxon>
        <taxon>Pseudomonadota</taxon>
        <taxon>Gammaproteobacteria</taxon>
        <taxon>Enterobacterales</taxon>
        <taxon>Morganellaceae</taxon>
        <taxon>Xenorhabdus</taxon>
    </lineage>
</organism>
<dbReference type="EC" id="3.1.13.1" evidence="2"/>
<dbReference type="EMBL" id="FN667741">
    <property type="protein sequence ID" value="CBJ81428.1"/>
    <property type="molecule type" value="Genomic_DNA"/>
</dbReference>
<dbReference type="RefSeq" id="WP_012988744.1">
    <property type="nucleotide sequence ID" value="NC_013892.1"/>
</dbReference>
<dbReference type="SMR" id="D3V184"/>
<dbReference type="STRING" id="406818.XBJ1_2302"/>
<dbReference type="KEGG" id="xbo:XBJ1_2302"/>
<dbReference type="PATRIC" id="fig|406818.4.peg.2075"/>
<dbReference type="eggNOG" id="COG4776">
    <property type="taxonomic scope" value="Bacteria"/>
</dbReference>
<dbReference type="HOGENOM" id="CLU_002333_7_3_6"/>
<dbReference type="Proteomes" id="UP000002045">
    <property type="component" value="Chromosome"/>
</dbReference>
<dbReference type="GO" id="GO:0005829">
    <property type="term" value="C:cytosol"/>
    <property type="evidence" value="ECO:0007669"/>
    <property type="project" value="UniProtKB-ARBA"/>
</dbReference>
<dbReference type="GO" id="GO:0008859">
    <property type="term" value="F:exoribonuclease II activity"/>
    <property type="evidence" value="ECO:0007669"/>
    <property type="project" value="UniProtKB-UniRule"/>
</dbReference>
<dbReference type="GO" id="GO:0003723">
    <property type="term" value="F:RNA binding"/>
    <property type="evidence" value="ECO:0007669"/>
    <property type="project" value="UniProtKB-KW"/>
</dbReference>
<dbReference type="GO" id="GO:0006402">
    <property type="term" value="P:mRNA catabolic process"/>
    <property type="evidence" value="ECO:0007669"/>
    <property type="project" value="UniProtKB-UniRule"/>
</dbReference>
<dbReference type="FunFam" id="2.40.50.140:FF:000079">
    <property type="entry name" value="Exoribonuclease 2"/>
    <property type="match status" value="1"/>
</dbReference>
<dbReference type="Gene3D" id="2.40.50.640">
    <property type="match status" value="1"/>
</dbReference>
<dbReference type="Gene3D" id="2.40.50.140">
    <property type="entry name" value="Nucleic acid-binding proteins"/>
    <property type="match status" value="2"/>
</dbReference>
<dbReference type="HAMAP" id="MF_01036">
    <property type="entry name" value="RNase_II"/>
    <property type="match status" value="1"/>
</dbReference>
<dbReference type="InterPro" id="IPR011129">
    <property type="entry name" value="CSD"/>
</dbReference>
<dbReference type="InterPro" id="IPR040476">
    <property type="entry name" value="CSD2"/>
</dbReference>
<dbReference type="InterPro" id="IPR012340">
    <property type="entry name" value="NA-bd_OB-fold"/>
</dbReference>
<dbReference type="InterPro" id="IPR013223">
    <property type="entry name" value="RNase_B_OB_dom"/>
</dbReference>
<dbReference type="InterPro" id="IPR011804">
    <property type="entry name" value="RNase_II"/>
</dbReference>
<dbReference type="InterPro" id="IPR001900">
    <property type="entry name" value="RNase_II/R"/>
</dbReference>
<dbReference type="InterPro" id="IPR022966">
    <property type="entry name" value="RNase_II/R_CS"/>
</dbReference>
<dbReference type="InterPro" id="IPR004476">
    <property type="entry name" value="RNase_II/RNase_R"/>
</dbReference>
<dbReference type="InterPro" id="IPR050180">
    <property type="entry name" value="RNR_Ribonuclease"/>
</dbReference>
<dbReference type="InterPro" id="IPR003029">
    <property type="entry name" value="S1_domain"/>
</dbReference>
<dbReference type="NCBIfam" id="TIGR00358">
    <property type="entry name" value="3_prime_RNase"/>
    <property type="match status" value="1"/>
</dbReference>
<dbReference type="NCBIfam" id="NF003455">
    <property type="entry name" value="PRK05054.1"/>
    <property type="match status" value="1"/>
</dbReference>
<dbReference type="NCBIfam" id="TIGR02062">
    <property type="entry name" value="RNase_B"/>
    <property type="match status" value="1"/>
</dbReference>
<dbReference type="PANTHER" id="PTHR23355:SF37">
    <property type="entry name" value="EXORIBONUCLEASE 2"/>
    <property type="match status" value="1"/>
</dbReference>
<dbReference type="PANTHER" id="PTHR23355">
    <property type="entry name" value="RIBONUCLEASE"/>
    <property type="match status" value="1"/>
</dbReference>
<dbReference type="Pfam" id="PF17876">
    <property type="entry name" value="CSD2"/>
    <property type="match status" value="1"/>
</dbReference>
<dbReference type="Pfam" id="PF08206">
    <property type="entry name" value="OB_RNB"/>
    <property type="match status" value="1"/>
</dbReference>
<dbReference type="Pfam" id="PF00773">
    <property type="entry name" value="RNB"/>
    <property type="match status" value="1"/>
</dbReference>
<dbReference type="Pfam" id="PF00575">
    <property type="entry name" value="S1"/>
    <property type="match status" value="1"/>
</dbReference>
<dbReference type="SMART" id="SM00357">
    <property type="entry name" value="CSP"/>
    <property type="match status" value="1"/>
</dbReference>
<dbReference type="SMART" id="SM00955">
    <property type="entry name" value="RNB"/>
    <property type="match status" value="1"/>
</dbReference>
<dbReference type="SUPFAM" id="SSF50249">
    <property type="entry name" value="Nucleic acid-binding proteins"/>
    <property type="match status" value="4"/>
</dbReference>
<dbReference type="PROSITE" id="PS01175">
    <property type="entry name" value="RIBONUCLEASE_II"/>
    <property type="match status" value="1"/>
</dbReference>